<sequence length="180" mass="20824">MIVYLHGFDSNSPGNHEKVLQLQFIDPDVRFISYSTLHPRHDMQYLLKEVDKAIQQGGDEKSLICGVGLGGFWAERIGFLCGIRQVAFNPNLYPQENMSGKIDRPEEYIDIASKCIDGFREKNRDRCLVVLSRHDEMLDSQRTAGDLHPYYEIVWDDKQNHKFKDLSPHLQRIKAFKTLG</sequence>
<gene>
    <name type="ordered locus">YPK_1701</name>
</gene>
<dbReference type="EMBL" id="CP000950">
    <property type="protein sequence ID" value="ACA67994.1"/>
    <property type="molecule type" value="Genomic_DNA"/>
</dbReference>
<dbReference type="SMR" id="B1JI48"/>
<dbReference type="ESTHER" id="yerpe-y1616">
    <property type="family name" value="abh_upf00227"/>
</dbReference>
<dbReference type="KEGG" id="ypy:YPK_1701"/>
<dbReference type="PATRIC" id="fig|502800.11.peg.2363"/>
<dbReference type="Gene3D" id="3.40.50.1820">
    <property type="entry name" value="alpha/beta hydrolase"/>
    <property type="match status" value="1"/>
</dbReference>
<dbReference type="HAMAP" id="MF_01047">
    <property type="entry name" value="UPF0227"/>
    <property type="match status" value="1"/>
</dbReference>
<dbReference type="InterPro" id="IPR029058">
    <property type="entry name" value="AB_hydrolase_fold"/>
</dbReference>
<dbReference type="InterPro" id="IPR022987">
    <property type="entry name" value="UPF0227"/>
</dbReference>
<dbReference type="InterPro" id="IPR008886">
    <property type="entry name" value="UPF0227/Esterase_YqiA"/>
</dbReference>
<dbReference type="NCBIfam" id="NF003431">
    <property type="entry name" value="PRK04940.1"/>
    <property type="match status" value="1"/>
</dbReference>
<dbReference type="PANTHER" id="PTHR35602">
    <property type="entry name" value="ESTERASE YQIA-RELATED"/>
    <property type="match status" value="1"/>
</dbReference>
<dbReference type="PANTHER" id="PTHR35602:SF2">
    <property type="entry name" value="UPF0227 PROTEIN YCFP"/>
    <property type="match status" value="1"/>
</dbReference>
<dbReference type="Pfam" id="PF05728">
    <property type="entry name" value="UPF0227"/>
    <property type="match status" value="1"/>
</dbReference>
<dbReference type="SUPFAM" id="SSF53474">
    <property type="entry name" value="alpha/beta-Hydrolases"/>
    <property type="match status" value="1"/>
</dbReference>
<proteinExistence type="inferred from homology"/>
<feature type="chain" id="PRO_1000136206" description="UPF0227 protein YPK_1701">
    <location>
        <begin position="1"/>
        <end position="180"/>
    </location>
</feature>
<comment type="similarity">
    <text evidence="1">Belongs to the UPF0227 family.</text>
</comment>
<organism>
    <name type="scientific">Yersinia pseudotuberculosis serotype O:3 (strain YPIII)</name>
    <dbReference type="NCBI Taxonomy" id="502800"/>
    <lineage>
        <taxon>Bacteria</taxon>
        <taxon>Pseudomonadati</taxon>
        <taxon>Pseudomonadota</taxon>
        <taxon>Gammaproteobacteria</taxon>
        <taxon>Enterobacterales</taxon>
        <taxon>Yersiniaceae</taxon>
        <taxon>Yersinia</taxon>
    </lineage>
</organism>
<accession>B1JI48</accession>
<evidence type="ECO:0000255" key="1">
    <source>
        <dbReference type="HAMAP-Rule" id="MF_01047"/>
    </source>
</evidence>
<protein>
    <recommendedName>
        <fullName evidence="1">UPF0227 protein YPK_1701</fullName>
    </recommendedName>
</protein>
<reference key="1">
    <citation type="submission" date="2008-02" db="EMBL/GenBank/DDBJ databases">
        <title>Complete sequence of Yersinia pseudotuberculosis YPIII.</title>
        <authorList>
            <consortium name="US DOE Joint Genome Institute"/>
            <person name="Copeland A."/>
            <person name="Lucas S."/>
            <person name="Lapidus A."/>
            <person name="Glavina del Rio T."/>
            <person name="Dalin E."/>
            <person name="Tice H."/>
            <person name="Bruce D."/>
            <person name="Goodwin L."/>
            <person name="Pitluck S."/>
            <person name="Munk A.C."/>
            <person name="Brettin T."/>
            <person name="Detter J.C."/>
            <person name="Han C."/>
            <person name="Tapia R."/>
            <person name="Schmutz J."/>
            <person name="Larimer F."/>
            <person name="Land M."/>
            <person name="Hauser L."/>
            <person name="Challacombe J.F."/>
            <person name="Green L."/>
            <person name="Lindler L.E."/>
            <person name="Nikolich M.P."/>
            <person name="Richardson P."/>
        </authorList>
    </citation>
    <scope>NUCLEOTIDE SEQUENCE [LARGE SCALE GENOMIC DNA]</scope>
    <source>
        <strain>YPIII</strain>
    </source>
</reference>
<name>Y1701_YERPY</name>